<comment type="similarity">
    <text evidence="3">Belongs to the eukaryotic ribosomal protein eL34 family.</text>
</comment>
<dbReference type="EMBL" id="AF271207">
    <property type="protein sequence ID" value="AAF87575.1"/>
    <property type="molecule type" value="mRNA"/>
</dbReference>
<dbReference type="SMR" id="Q9NB34"/>
<dbReference type="GO" id="GO:1990904">
    <property type="term" value="C:ribonucleoprotein complex"/>
    <property type="evidence" value="ECO:0007669"/>
    <property type="project" value="UniProtKB-KW"/>
</dbReference>
<dbReference type="GO" id="GO:0005840">
    <property type="term" value="C:ribosome"/>
    <property type="evidence" value="ECO:0007669"/>
    <property type="project" value="UniProtKB-KW"/>
</dbReference>
<dbReference type="GO" id="GO:0003735">
    <property type="term" value="F:structural constituent of ribosome"/>
    <property type="evidence" value="ECO:0007669"/>
    <property type="project" value="InterPro"/>
</dbReference>
<dbReference type="GO" id="GO:0006412">
    <property type="term" value="P:translation"/>
    <property type="evidence" value="ECO:0007669"/>
    <property type="project" value="InterPro"/>
</dbReference>
<dbReference type="Gene3D" id="6.20.340.10">
    <property type="match status" value="1"/>
</dbReference>
<dbReference type="Gene3D" id="6.20.370.70">
    <property type="match status" value="1"/>
</dbReference>
<dbReference type="HAMAP" id="MF_00349">
    <property type="entry name" value="Ribosomal_eL34"/>
    <property type="match status" value="1"/>
</dbReference>
<dbReference type="InterPro" id="IPR008195">
    <property type="entry name" value="Ribosomal_eL34"/>
</dbReference>
<dbReference type="InterPro" id="IPR038562">
    <property type="entry name" value="Ribosomal_eL34_C_sf"/>
</dbReference>
<dbReference type="InterPro" id="IPR018065">
    <property type="entry name" value="Ribosomal_eL34_CS"/>
</dbReference>
<dbReference type="InterPro" id="IPR047868">
    <property type="entry name" value="Ribosomal_L34e_arc-type"/>
</dbReference>
<dbReference type="PANTHER" id="PTHR10759">
    <property type="entry name" value="60S RIBOSOMAL PROTEIN L34"/>
    <property type="match status" value="1"/>
</dbReference>
<dbReference type="Pfam" id="PF01199">
    <property type="entry name" value="Ribosomal_L34e"/>
    <property type="match status" value="1"/>
</dbReference>
<dbReference type="PRINTS" id="PR01250">
    <property type="entry name" value="RIBOSOMALL34"/>
</dbReference>
<dbReference type="PROSITE" id="PS01145">
    <property type="entry name" value="RIBOSOMAL_L34E"/>
    <property type="match status" value="1"/>
</dbReference>
<gene>
    <name type="primary">RpL34</name>
</gene>
<accession>Q9NB34</accession>
<organism>
    <name type="scientific">Ochlerotatus triseriatus</name>
    <name type="common">Eastern treehole mosquito</name>
    <name type="synonym">Aedes triseriatus</name>
    <dbReference type="NCBI Taxonomy" id="7162"/>
    <lineage>
        <taxon>Eukaryota</taxon>
        <taxon>Metazoa</taxon>
        <taxon>Ecdysozoa</taxon>
        <taxon>Arthropoda</taxon>
        <taxon>Hexapoda</taxon>
        <taxon>Insecta</taxon>
        <taxon>Pterygota</taxon>
        <taxon>Neoptera</taxon>
        <taxon>Endopterygota</taxon>
        <taxon>Diptera</taxon>
        <taxon>Nematocera</taxon>
        <taxon>Culicoidea</taxon>
        <taxon>Culicidae</taxon>
        <taxon>Culicinae</taxon>
        <taxon>Aedini</taxon>
        <taxon>Ochlerotatus</taxon>
        <taxon>Protomacleaya</taxon>
    </lineage>
</organism>
<sequence>MVQRLTLRRRLSYNTKSNKRRVVRTPGGRLVYLYVKKQRTVPKCGQCKEKLSGIKPSRPSERPRMCRRLKTVTRTFGGVLCHRCLRERIIRAFLIDEQKVVKVLKAQQLGKPVSKPPKIAKAPAAAAAAKPAKTATKSK</sequence>
<feature type="initiator methionine" description="Removed" evidence="1">
    <location>
        <position position="1"/>
    </location>
</feature>
<feature type="chain" id="PRO_0000131838" description="Large ribosomal subunit protein eL34">
    <location>
        <begin position="2"/>
        <end position="139"/>
    </location>
</feature>
<feature type="region of interest" description="Disordered" evidence="2">
    <location>
        <begin position="113"/>
        <end position="139"/>
    </location>
</feature>
<protein>
    <recommendedName>
        <fullName evidence="3">Large ribosomal subunit protein eL34</fullName>
    </recommendedName>
    <alternativeName>
        <fullName>60S ribosomal protein L34</fullName>
    </alternativeName>
</protein>
<name>RL34_OCHTR</name>
<keyword id="KW-0687">Ribonucleoprotein</keyword>
<keyword id="KW-0689">Ribosomal protein</keyword>
<reference key="1">
    <citation type="journal article" date="2000" name="DNA Seq.">
        <title>Molecular cloning and complete cDNA sequences of the ribosomal proteins rpl34 and rpl44 from Aedes triseriatus mosquitoes.</title>
        <authorList>
            <person name="Blitvich B.J."/>
            <person name="Rayms-Keller A."/>
            <person name="Blair C.D."/>
            <person name="Beaty B.J."/>
        </authorList>
    </citation>
    <scope>NUCLEOTIDE SEQUENCE [MRNA]</scope>
</reference>
<proteinExistence type="evidence at transcript level"/>
<evidence type="ECO:0000250" key="1"/>
<evidence type="ECO:0000256" key="2">
    <source>
        <dbReference type="SAM" id="MobiDB-lite"/>
    </source>
</evidence>
<evidence type="ECO:0000305" key="3"/>